<accession>Q7V1B0</accession>
<gene>
    <name evidence="1" type="primary">ureG</name>
    <name type="ordered locus">PMM0969</name>
</gene>
<reference key="1">
    <citation type="journal article" date="2003" name="Nature">
        <title>Genome divergence in two Prochlorococcus ecotypes reflects oceanic niche differentiation.</title>
        <authorList>
            <person name="Rocap G."/>
            <person name="Larimer F.W."/>
            <person name="Lamerdin J.E."/>
            <person name="Malfatti S."/>
            <person name="Chain P."/>
            <person name="Ahlgren N.A."/>
            <person name="Arellano A."/>
            <person name="Coleman M."/>
            <person name="Hauser L."/>
            <person name="Hess W.R."/>
            <person name="Johnson Z.I."/>
            <person name="Land M.L."/>
            <person name="Lindell D."/>
            <person name="Post A.F."/>
            <person name="Regala W."/>
            <person name="Shah M."/>
            <person name="Shaw S.L."/>
            <person name="Steglich C."/>
            <person name="Sullivan M.B."/>
            <person name="Ting C.S."/>
            <person name="Tolonen A."/>
            <person name="Webb E.A."/>
            <person name="Zinser E.R."/>
            <person name="Chisholm S.W."/>
        </authorList>
    </citation>
    <scope>NUCLEOTIDE SEQUENCE [LARGE SCALE GENOMIC DNA]</scope>
    <source>
        <strain>CCMP1986 / NIES-2087 / MED4</strain>
    </source>
</reference>
<sequence length="201" mass="21780">MSSKLRVGVAGPVGSGKTALVETLCIALKKRYKIAVVTNDIYTKEDANFLIKKKILEEGRIVGVETGGCPHTAIREDCSLNKNAVMDLENKYDPLDFIFVESGGDNLAASFSPELVDLSIYVIDVSAGDKIPRKGGPGITRSDLLLINKIDLADMVGANLNIMQNDTNMMRDGKPWFFTNLSSGSGVDNVIKYLVAQIPNI</sequence>
<keyword id="KW-0143">Chaperone</keyword>
<keyword id="KW-0963">Cytoplasm</keyword>
<keyword id="KW-0342">GTP-binding</keyword>
<keyword id="KW-0996">Nickel insertion</keyword>
<keyword id="KW-0547">Nucleotide-binding</keyword>
<name>UREG_PROMP</name>
<organism>
    <name type="scientific">Prochlorococcus marinus subsp. pastoris (strain CCMP1986 / NIES-2087 / MED4)</name>
    <dbReference type="NCBI Taxonomy" id="59919"/>
    <lineage>
        <taxon>Bacteria</taxon>
        <taxon>Bacillati</taxon>
        <taxon>Cyanobacteriota</taxon>
        <taxon>Cyanophyceae</taxon>
        <taxon>Synechococcales</taxon>
        <taxon>Prochlorococcaceae</taxon>
        <taxon>Prochlorococcus</taxon>
    </lineage>
</organism>
<feature type="chain" id="PRO_0000347421" description="Urease accessory protein UreG">
    <location>
        <begin position="1"/>
        <end position="201"/>
    </location>
</feature>
<feature type="binding site" evidence="1">
    <location>
        <begin position="11"/>
        <end position="18"/>
    </location>
    <ligand>
        <name>GTP</name>
        <dbReference type="ChEBI" id="CHEBI:37565"/>
    </ligand>
</feature>
<protein>
    <recommendedName>
        <fullName evidence="1">Urease accessory protein UreG</fullName>
    </recommendedName>
</protein>
<proteinExistence type="inferred from homology"/>
<comment type="function">
    <text evidence="1">Facilitates the functional incorporation of the urease nickel metallocenter. This process requires GTP hydrolysis, probably effectuated by UreG.</text>
</comment>
<comment type="subunit">
    <text evidence="1">Homodimer. UreD, UreF and UreG form a complex that acts as a GTP-hydrolysis-dependent molecular chaperone, activating the urease apoprotein by helping to assemble the nickel containing metallocenter of UreC. The UreE protein probably delivers the nickel.</text>
</comment>
<comment type="subcellular location">
    <subcellularLocation>
        <location evidence="1">Cytoplasm</location>
    </subcellularLocation>
</comment>
<comment type="similarity">
    <text evidence="1">Belongs to the SIMIBI class G3E GTPase family. UreG subfamily.</text>
</comment>
<dbReference type="EMBL" id="BX548174">
    <property type="protein sequence ID" value="CAE19428.1"/>
    <property type="molecule type" value="Genomic_DNA"/>
</dbReference>
<dbReference type="RefSeq" id="WP_011132602.1">
    <property type="nucleotide sequence ID" value="NC_005072.1"/>
</dbReference>
<dbReference type="SMR" id="Q7V1B0"/>
<dbReference type="STRING" id="59919.PMM0969"/>
<dbReference type="KEGG" id="pmm:PMM0969"/>
<dbReference type="eggNOG" id="COG0378">
    <property type="taxonomic scope" value="Bacteria"/>
</dbReference>
<dbReference type="HOGENOM" id="CLU_072144_1_0_3"/>
<dbReference type="OrthoDB" id="9802035at2"/>
<dbReference type="Proteomes" id="UP000001026">
    <property type="component" value="Chromosome"/>
</dbReference>
<dbReference type="GO" id="GO:0005737">
    <property type="term" value="C:cytoplasm"/>
    <property type="evidence" value="ECO:0007669"/>
    <property type="project" value="UniProtKB-SubCell"/>
</dbReference>
<dbReference type="GO" id="GO:0005525">
    <property type="term" value="F:GTP binding"/>
    <property type="evidence" value="ECO:0007669"/>
    <property type="project" value="UniProtKB-KW"/>
</dbReference>
<dbReference type="GO" id="GO:0003924">
    <property type="term" value="F:GTPase activity"/>
    <property type="evidence" value="ECO:0007669"/>
    <property type="project" value="InterPro"/>
</dbReference>
<dbReference type="GO" id="GO:0016151">
    <property type="term" value="F:nickel cation binding"/>
    <property type="evidence" value="ECO:0007669"/>
    <property type="project" value="UniProtKB-UniRule"/>
</dbReference>
<dbReference type="GO" id="GO:0043419">
    <property type="term" value="P:urea catabolic process"/>
    <property type="evidence" value="ECO:0007669"/>
    <property type="project" value="InterPro"/>
</dbReference>
<dbReference type="CDD" id="cd05540">
    <property type="entry name" value="UreG"/>
    <property type="match status" value="1"/>
</dbReference>
<dbReference type="FunFam" id="3.40.50.300:FF:000208">
    <property type="entry name" value="Urease accessory protein UreG"/>
    <property type="match status" value="1"/>
</dbReference>
<dbReference type="Gene3D" id="3.40.50.300">
    <property type="entry name" value="P-loop containing nucleotide triphosphate hydrolases"/>
    <property type="match status" value="1"/>
</dbReference>
<dbReference type="HAMAP" id="MF_01389">
    <property type="entry name" value="UreG"/>
    <property type="match status" value="1"/>
</dbReference>
<dbReference type="InterPro" id="IPR003495">
    <property type="entry name" value="CobW/HypB/UreG_nucleotide-bd"/>
</dbReference>
<dbReference type="InterPro" id="IPR027417">
    <property type="entry name" value="P-loop_NTPase"/>
</dbReference>
<dbReference type="InterPro" id="IPR004400">
    <property type="entry name" value="UreG"/>
</dbReference>
<dbReference type="NCBIfam" id="TIGR00101">
    <property type="entry name" value="ureG"/>
    <property type="match status" value="1"/>
</dbReference>
<dbReference type="PANTHER" id="PTHR31715">
    <property type="entry name" value="UREASE ACCESSORY PROTEIN G"/>
    <property type="match status" value="1"/>
</dbReference>
<dbReference type="PANTHER" id="PTHR31715:SF0">
    <property type="entry name" value="UREASE ACCESSORY PROTEIN G"/>
    <property type="match status" value="1"/>
</dbReference>
<dbReference type="Pfam" id="PF02492">
    <property type="entry name" value="cobW"/>
    <property type="match status" value="1"/>
</dbReference>
<dbReference type="PIRSF" id="PIRSF005624">
    <property type="entry name" value="Ni-bind_GTPase"/>
    <property type="match status" value="1"/>
</dbReference>
<dbReference type="SUPFAM" id="SSF52540">
    <property type="entry name" value="P-loop containing nucleoside triphosphate hydrolases"/>
    <property type="match status" value="1"/>
</dbReference>
<evidence type="ECO:0000255" key="1">
    <source>
        <dbReference type="HAMAP-Rule" id="MF_01389"/>
    </source>
</evidence>